<dbReference type="EMBL" id="LN999945">
    <property type="protein sequence ID" value="CZT98699.1"/>
    <property type="molecule type" value="Genomic_DNA"/>
</dbReference>
<dbReference type="RefSeq" id="XP_001347720.1">
    <property type="nucleotide sequence ID" value="XM_001347684.1"/>
</dbReference>
<dbReference type="SMR" id="Q8IIW9"/>
<dbReference type="FunCoup" id="Q8IIW9">
    <property type="interactions" value="3"/>
</dbReference>
<dbReference type="STRING" id="36329.Q8IIW9"/>
<dbReference type="PaxDb" id="5833-PF11_0044"/>
<dbReference type="EnsemblProtists" id="CZT98699">
    <property type="protein sequence ID" value="CZT98699"/>
    <property type="gene ID" value="PF3D7_1103400"/>
</dbReference>
<dbReference type="GeneID" id="810597"/>
<dbReference type="KEGG" id="pfa:PF3D7_1103400"/>
<dbReference type="VEuPathDB" id="PlasmoDB:PF3D7_1103400"/>
<dbReference type="HOGENOM" id="CLU_258453_0_0_1"/>
<dbReference type="InParanoid" id="Q8IIW9"/>
<dbReference type="OMA" id="YKKNTQP"/>
<dbReference type="OrthoDB" id="2510at2759"/>
<dbReference type="PhylomeDB" id="Q8IIW9"/>
<dbReference type="UniPathway" id="UPA00266"/>
<dbReference type="Proteomes" id="UP000001450">
    <property type="component" value="Chromosome 11"/>
</dbReference>
<dbReference type="GO" id="GO:0020011">
    <property type="term" value="C:apicoplast"/>
    <property type="evidence" value="ECO:0007669"/>
    <property type="project" value="UniProtKB-SubCell"/>
</dbReference>
<dbReference type="GO" id="GO:0051539">
    <property type="term" value="F:4 iron, 4 sulfur cluster binding"/>
    <property type="evidence" value="ECO:0007669"/>
    <property type="project" value="UniProtKB-KW"/>
</dbReference>
<dbReference type="GO" id="GO:0046872">
    <property type="term" value="F:metal ion binding"/>
    <property type="evidence" value="ECO:0007669"/>
    <property type="project" value="UniProtKB-KW"/>
</dbReference>
<dbReference type="GO" id="GO:0016226">
    <property type="term" value="P:iron-sulfur cluster assembly"/>
    <property type="evidence" value="ECO:0007669"/>
    <property type="project" value="InterPro"/>
</dbReference>
<dbReference type="InterPro" id="IPR055346">
    <property type="entry name" value="Fe-S_cluster_assembly_SufBD"/>
</dbReference>
<dbReference type="InterPro" id="IPR000825">
    <property type="entry name" value="SUF_FeS_clus_asmbl_SufBD_core"/>
</dbReference>
<dbReference type="InterPro" id="IPR037284">
    <property type="entry name" value="SUF_FeS_clus_asmbl_SufBD_sf"/>
</dbReference>
<dbReference type="PANTHER" id="PTHR43575">
    <property type="entry name" value="PROTEIN ABCI7, CHLOROPLASTIC"/>
    <property type="match status" value="1"/>
</dbReference>
<dbReference type="PANTHER" id="PTHR43575:SF1">
    <property type="entry name" value="PROTEIN ABCI7, CHLOROPLASTIC"/>
    <property type="match status" value="1"/>
</dbReference>
<dbReference type="Pfam" id="PF01458">
    <property type="entry name" value="SUFBD_core"/>
    <property type="match status" value="1"/>
</dbReference>
<dbReference type="SUPFAM" id="SSF101960">
    <property type="entry name" value="Stabilizer of iron transporter SufD"/>
    <property type="match status" value="1"/>
</dbReference>
<evidence type="ECO:0000250" key="1">
    <source>
        <dbReference type="UniProtKB" id="A0A509AQJ1"/>
    </source>
</evidence>
<evidence type="ECO:0000256" key="2">
    <source>
        <dbReference type="SAM" id="MobiDB-lite"/>
    </source>
</evidence>
<evidence type="ECO:0000269" key="3">
    <source>
    </source>
</evidence>
<evidence type="ECO:0000269" key="4">
    <source>
    </source>
</evidence>
<evidence type="ECO:0000303" key="5">
    <source>
    </source>
</evidence>
<evidence type="ECO:0000303" key="6">
    <source>
    </source>
</evidence>
<evidence type="ECO:0000305" key="7"/>
<evidence type="ECO:0000312" key="8">
    <source>
        <dbReference type="EMBL" id="CZT98699.1"/>
    </source>
</evidence>
<evidence type="ECO:0000312" key="9">
    <source>
        <dbReference type="Proteomes" id="UP000001450"/>
    </source>
</evidence>
<reference evidence="9" key="1">
    <citation type="journal article" date="2002" name="Nature">
        <title>Genome sequence of the human malaria parasite Plasmodium falciparum.</title>
        <authorList>
            <person name="Gardner M.J."/>
            <person name="Hall N."/>
            <person name="Fung E."/>
            <person name="White O."/>
            <person name="Berriman M."/>
            <person name="Hyman R.W."/>
            <person name="Carlton J.M."/>
            <person name="Pain A."/>
            <person name="Nelson K.E."/>
            <person name="Bowman S."/>
            <person name="Paulsen I.T."/>
            <person name="James K.D."/>
            <person name="Eisen J.A."/>
            <person name="Rutherford K.M."/>
            <person name="Salzberg S.L."/>
            <person name="Craig A."/>
            <person name="Kyes S."/>
            <person name="Chan M.-S."/>
            <person name="Nene V."/>
            <person name="Shallom S.J."/>
            <person name="Suh B."/>
            <person name="Peterson J."/>
            <person name="Angiuoli S."/>
            <person name="Pertea M."/>
            <person name="Allen J."/>
            <person name="Selengut J."/>
            <person name="Haft D."/>
            <person name="Mather M.W."/>
            <person name="Vaidya A.B."/>
            <person name="Martin D.M.A."/>
            <person name="Fairlamb A.H."/>
            <person name="Fraunholz M.J."/>
            <person name="Roos D.S."/>
            <person name="Ralph S.A."/>
            <person name="McFadden G.I."/>
            <person name="Cummings L.M."/>
            <person name="Subramanian G.M."/>
            <person name="Mungall C."/>
            <person name="Venter J.C."/>
            <person name="Carucci D.J."/>
            <person name="Hoffman S.L."/>
            <person name="Newbold C."/>
            <person name="Davis R.W."/>
            <person name="Fraser C.M."/>
            <person name="Barrell B.G."/>
        </authorList>
    </citation>
    <scope>NUCLEOTIDE SEQUENCE [LARGE SCALE GENOMIC DNA]</scope>
    <source>
        <strain evidence="9">3D7</strain>
    </source>
</reference>
<reference evidence="7" key="2">
    <citation type="journal article" date="2017" name="FEBS J.">
        <title>[Fe-S] cluster assembly in the apicoplast and its indispensability in mosquito stages of the malaria parasite.</title>
        <authorList>
            <person name="Charan M."/>
            <person name="Choudhary H.H."/>
            <person name="Singh N."/>
            <person name="Sadik M."/>
            <person name="Siddiqi M.I."/>
            <person name="Mishra S."/>
            <person name="Habib S."/>
        </authorList>
    </citation>
    <scope>FUNCTION</scope>
    <scope>IDENTIFICATION IN COMPLEX WITH SUFB AND SUFC</scope>
    <scope>INTERACTION WITH SUFB AND SUFC</scope>
    <scope>PROTEOLYTIC CLEAVAGE</scope>
</reference>
<reference evidence="7" key="3">
    <citation type="journal article" date="2023" name="Elife">
        <title>The Plasmodium falciparum apicoplast cysteine desulfurase provides sulfur for both iron-sulfur cluster assembly and tRNA modification.</title>
        <authorList>
            <person name="Swift R.P."/>
            <person name="Elahi R."/>
            <person name="Rajaram K."/>
            <person name="Liu H.B."/>
            <person name="Prigge S.T."/>
        </authorList>
    </citation>
    <scope>DISRUPTION PHENOTYPE</scope>
    <source>
        <strain evidence="6">NF54</strain>
    </source>
</reference>
<comment type="function">
    <text evidence="3">Participates in the sulfur mobilization (SUF) pathway for iron-sulfur (Fe-S) cluster biogenesis (PubMed:28695709). As part of a complex consisting of SufB-SufC(2)-SufD, involved in assembly of [4Fe-4S] clusters (PubMed:28695709). Enhances the ATPase activity of SufC (PubMed:28695709).</text>
</comment>
<comment type="pathway">
    <text evidence="7">Cofactor biosynthesis; iron-sulfur cluster biosynthesis.</text>
</comment>
<comment type="subunit">
    <text evidence="3">Component of a complex composed of SufB, SufC and SufD in a stoichiometric ratio of 1:2:1 (PubMed:28695709). Interacts with SufB (PubMed:28695709). Interacts with SufC; the interaction enhances the ATPase activity of SufC (PubMed:28695709).</text>
</comment>
<comment type="subcellular location">
    <subcellularLocation>
        <location evidence="1">Plastid</location>
        <location evidence="1">Apicoplast</location>
    </subcellularLocation>
</comment>
<comment type="PTM">
    <text evidence="3">Proteolytically cleaved.</text>
</comment>
<comment type="disruption phenotype">
    <text evidence="4">Parasites require exogenously provided mevalonate for survival (PubMed:37166116). No significant effects on apicoplast morphology (PubMed:37166116).</text>
</comment>
<comment type="similarity">
    <text evidence="7">Belongs to the iron-sulfur cluster assembly SufBD family.</text>
</comment>
<protein>
    <recommendedName>
        <fullName evidence="7">Iron-sulfur cluster assembly protein SufD</fullName>
        <shortName evidence="5">PfSufD</shortName>
    </recommendedName>
</protein>
<accession>Q8IIW9</accession>
<gene>
    <name evidence="5 6" type="primary">SufD</name>
    <name evidence="8" type="ORF">PF3D7_1103400</name>
</gene>
<name>SUFD_PLAF7</name>
<organism evidence="9">
    <name type="scientific">Plasmodium falciparum (isolate 3D7)</name>
    <dbReference type="NCBI Taxonomy" id="36329"/>
    <lineage>
        <taxon>Eukaryota</taxon>
        <taxon>Sar</taxon>
        <taxon>Alveolata</taxon>
        <taxon>Apicomplexa</taxon>
        <taxon>Aconoidasida</taxon>
        <taxon>Haemosporida</taxon>
        <taxon>Plasmodiidae</taxon>
        <taxon>Plasmodium</taxon>
        <taxon>Plasmodium (Laverania)</taxon>
    </lineage>
</organism>
<feature type="chain" id="PRO_0000459590" description="Iron-sulfur cluster assembly protein SufD">
    <location>
        <begin position="1"/>
        <end position="1462"/>
    </location>
</feature>
<feature type="region of interest" description="Disordered" evidence="2">
    <location>
        <begin position="500"/>
        <end position="525"/>
    </location>
</feature>
<feature type="region of interest" description="Disordered" evidence="2">
    <location>
        <begin position="938"/>
        <end position="970"/>
    </location>
</feature>
<feature type="region of interest" description="Disordered" evidence="2">
    <location>
        <begin position="1111"/>
        <end position="1153"/>
    </location>
</feature>
<feature type="compositionally biased region" description="Low complexity" evidence="2">
    <location>
        <begin position="510"/>
        <end position="523"/>
    </location>
</feature>
<feature type="compositionally biased region" description="Basic and acidic residues" evidence="2">
    <location>
        <begin position="961"/>
        <end position="970"/>
    </location>
</feature>
<feature type="compositionally biased region" description="Low complexity" evidence="2">
    <location>
        <begin position="1111"/>
        <end position="1136"/>
    </location>
</feature>
<sequence>MPNIFLSNYIFIFILLTNKFLKTFDYVESKHWNNICLKDLYDKNDIKLNKTNKLKLKYKNFMFSDLKKQKKRKETETATGTITQKQKHTKKKKLHGQTNGYFIKRNKIQHIFANIPYNNNFKKINQDIYTFKNVNYHPKNANKKVYLKINNATHLETIKTYITKCIKNYRHQNEEKTQKKIRNYNNIIQYYVSRKNNNNNNNNRFIHTYNMLFINIFYNIISKNRNEKKKKNRKTDFQKYLRKYEELYQKFTPENDAENNDINNDKNNSDLISQINKKNISNIIINEWCLRNNNEKYNSTLMYDYISNMHNTEYQDITCVNNFIKNNEMIEKETWEHKQKPYLTYKYEFKYRDPINRKNKLYQYEYYIPKLITYEEDISTEPKFVPSNFKSPKCYNNSPVNALTTSGFSSRNIDTFGKERNKIYSFNTPTDVKRNIFFDDLILISSSYNQHFFPNLNFLLNLHTLQILIRDKTAIETDYMIDKFDQLKEKLIQINSPHVIDNNQNDDIDNNNNNNNNNNNCDNPYNKRIIPINNKSTNNDACTIDNISNIQHRKNQTNDQNNKSKDDEINEEISSNLTYKKTLFDDKIQLFKNKYDKNILDDKDFVQLWKYNEKGEIVETINKIPIPKIYLNIDDPKYLSWKILQNSGKTAFKEIPTPNRKLEAWRQQVNLKTFYKQNFDSSISLRNISKEELVDYKMKIVDNTFEKNEKVQNDISDHFDNIKMDNQQNEEKVELNENINYYNSDNINGDNINGDNINGDNINGDNINGDNINGDNINGDNINGDNINGDNINGDNINGDNINDDNINDDNINDVNNNHNNNHNSDNHYYYGDTHKINNQNKKNVNETINISENTNMDDNNNNEIYSQNYKEQRIKNQDISNNAYNFNKEHIDKCKRKYKKAFYTLVVRDGIVDEYLSDDINILKNLDNKLKKKSEINQNKENENENENNSQSDNNTTKQHIQDEQGTEQKKSKIFVGSFFNVKDVEIEYLINKELYFIPEHSNWYKTNTQPFIRGQIGKQSRKFDNDYPIYDYRKSDFGMAKFSSLNLASIKDCAVVYLDENIDLSDKFIHVIFIATSKNEDIDNNNNNNDNNNDNDIYEKQSKYNVYENIPSNNKQTNSNNNSEYNNEQNNCSNKQITNDEQNDNEYEKEESIQKCHMEKVISSHDDTIQNCDIEKNECKENKKSKYTQIKLTEYHTHNPITNPRLVVYVKGNSKINIYESHISLNKSNSGLVNGFSRICLEEKSNVKHTLSQELGNNVWHFHNVSVKNGLNANYKFVDVLLGSLSSRINLQIEGEKGCKQESYGLSLLEDKQNISQYEMFHHEHPSMETNQLFKCLVSDKAHAVWRSRGRIERNAIKAKLNTLCKSILLNFGASAVCIPTLEIIPSDIECANHGATISDLEKEPIFSLMTRGISERNAREIMMNSFVKEILDHISDENLKNRVYQKVLKFSQKYKSSTY</sequence>
<keyword id="KW-0004">4Fe-4S</keyword>
<keyword id="KW-0933">Apicoplast</keyword>
<keyword id="KW-0408">Iron</keyword>
<keyword id="KW-0411">Iron-sulfur</keyword>
<keyword id="KW-0479">Metal-binding</keyword>
<keyword id="KW-0934">Plastid</keyword>
<keyword id="KW-1185">Reference proteome</keyword>
<proteinExistence type="evidence at protein level"/>